<comment type="function">
    <text evidence="1">Specifically methylates the guanine in position 2445 (m2G2445) and the guanine in position 2069 (m7G2069) of 23S rRNA.</text>
</comment>
<comment type="catalytic activity">
    <reaction evidence="1">
        <text>guanosine(2445) in 23S rRNA + S-adenosyl-L-methionine = N(2)-methylguanosine(2445) in 23S rRNA + S-adenosyl-L-homocysteine + H(+)</text>
        <dbReference type="Rhea" id="RHEA:42740"/>
        <dbReference type="Rhea" id="RHEA-COMP:10215"/>
        <dbReference type="Rhea" id="RHEA-COMP:10216"/>
        <dbReference type="ChEBI" id="CHEBI:15378"/>
        <dbReference type="ChEBI" id="CHEBI:57856"/>
        <dbReference type="ChEBI" id="CHEBI:59789"/>
        <dbReference type="ChEBI" id="CHEBI:74269"/>
        <dbReference type="ChEBI" id="CHEBI:74481"/>
        <dbReference type="EC" id="2.1.1.173"/>
    </reaction>
</comment>
<comment type="catalytic activity">
    <reaction evidence="1">
        <text>guanosine(2069) in 23S rRNA + S-adenosyl-L-methionine = N(2)-methylguanosine(2069) in 23S rRNA + S-adenosyl-L-homocysteine + H(+)</text>
        <dbReference type="Rhea" id="RHEA:43772"/>
        <dbReference type="Rhea" id="RHEA-COMP:10688"/>
        <dbReference type="Rhea" id="RHEA-COMP:10689"/>
        <dbReference type="ChEBI" id="CHEBI:15378"/>
        <dbReference type="ChEBI" id="CHEBI:57856"/>
        <dbReference type="ChEBI" id="CHEBI:59789"/>
        <dbReference type="ChEBI" id="CHEBI:74269"/>
        <dbReference type="ChEBI" id="CHEBI:74481"/>
        <dbReference type="EC" id="2.1.1.264"/>
    </reaction>
</comment>
<comment type="subcellular location">
    <subcellularLocation>
        <location evidence="1">Cytoplasm</location>
    </subcellularLocation>
</comment>
<comment type="similarity">
    <text evidence="1">Belongs to the methyltransferase superfamily. RlmKL family.</text>
</comment>
<gene>
    <name evidence="1" type="primary">rlmL</name>
    <name type="ordered locus">SSON_0952</name>
</gene>
<reference key="1">
    <citation type="journal article" date="2005" name="Nucleic Acids Res.">
        <title>Genome dynamics and diversity of Shigella species, the etiologic agents of bacillary dysentery.</title>
        <authorList>
            <person name="Yang F."/>
            <person name="Yang J."/>
            <person name="Zhang X."/>
            <person name="Chen L."/>
            <person name="Jiang Y."/>
            <person name="Yan Y."/>
            <person name="Tang X."/>
            <person name="Wang J."/>
            <person name="Xiong Z."/>
            <person name="Dong J."/>
            <person name="Xue Y."/>
            <person name="Zhu Y."/>
            <person name="Xu X."/>
            <person name="Sun L."/>
            <person name="Chen S."/>
            <person name="Nie H."/>
            <person name="Peng J."/>
            <person name="Xu J."/>
            <person name="Wang Y."/>
            <person name="Yuan Z."/>
            <person name="Wen Y."/>
            <person name="Yao Z."/>
            <person name="Shen Y."/>
            <person name="Qiang B."/>
            <person name="Hou Y."/>
            <person name="Yu J."/>
            <person name="Jin Q."/>
        </authorList>
    </citation>
    <scope>NUCLEOTIDE SEQUENCE [LARGE SCALE GENOMIC DNA]</scope>
    <source>
        <strain>Ss046</strain>
    </source>
</reference>
<keyword id="KW-0963">Cytoplasm</keyword>
<keyword id="KW-0489">Methyltransferase</keyword>
<keyword id="KW-1185">Reference proteome</keyword>
<keyword id="KW-0694">RNA-binding</keyword>
<keyword id="KW-0698">rRNA processing</keyword>
<keyword id="KW-0949">S-adenosyl-L-methionine</keyword>
<keyword id="KW-0808">Transferase</keyword>
<organism>
    <name type="scientific">Shigella sonnei (strain Ss046)</name>
    <dbReference type="NCBI Taxonomy" id="300269"/>
    <lineage>
        <taxon>Bacteria</taxon>
        <taxon>Pseudomonadati</taxon>
        <taxon>Pseudomonadota</taxon>
        <taxon>Gammaproteobacteria</taxon>
        <taxon>Enterobacterales</taxon>
        <taxon>Enterobacteriaceae</taxon>
        <taxon>Shigella</taxon>
    </lineage>
</organism>
<sequence>MNSLFASTARGLEELLKTELENLGAVECQVVQGGVHFKGDTRLVYQSLMWSRLASRIMLPLGECKVYSDLDLYLGVQAINWTEMFNPGATFAVHFSGLNDTIRNSQYGAMKVKDAIVDAFTRKNLPRPNVDRDAPDIRVNVWLHKETASIALDLSGDGLHLRGYRDRAGIAPIKETLAAAIVMRTGWQPGTPLLDPMCGSGTLLIEAAMLATDRAPGLHRGRWGFSGWVQHDEAIWQEVKAEAQTRARKGLAEYSSHFYGSDSDARVIQRARTNARLAGIGELITFEVKDVAQLTNPLPKGPYGTVLSNPPYGERLDSEPALIALHSLLGRIMKNQFGGWNLSLFSASPDLLSCLQLRADKQYKAKNGPLDCVQKNYHVAESTPDSKPAMVAEDYANRLRKNLKKFEKWARQEGIECYRLYDADLPEYNVAVDRYADWVVVQEYAPPKTIDAHKARQRLFDIIAATISVLGIAPNKLVLKTRERQKGKNQYQKLGEKGEFLEVTEYNAHLWVNLTDYLDTGLFLDHRIARRMLGQMSKGKDFLNLFSYTGSATVHAGLGGARSTTTVDMSRTYLEWAERNLRLNGLTGRAHRLIQADCLAWLREANEQFDLIFIDPPTFSNSKRMEDAFDVQRDHMALMKDLKRLLRAGGTIMFSNNKRGFRMDLDGLAKLGLKAQEITQKTLSQDFARNRQIHNCWLITAA</sequence>
<name>RLMKL_SHISS</name>
<evidence type="ECO:0000255" key="1">
    <source>
        <dbReference type="HAMAP-Rule" id="MF_01858"/>
    </source>
</evidence>
<feature type="chain" id="PRO_0000366841" description="Ribosomal RNA large subunit methyltransferase K/L">
    <location>
        <begin position="1"/>
        <end position="702"/>
    </location>
</feature>
<feature type="domain" description="THUMP" evidence="1">
    <location>
        <begin position="43"/>
        <end position="154"/>
    </location>
</feature>
<accession>Q3Z3H3</accession>
<protein>
    <recommendedName>
        <fullName evidence="1">Ribosomal RNA large subunit methyltransferase K/L</fullName>
    </recommendedName>
    <domain>
        <recommendedName>
            <fullName evidence="1">23S rRNA m2G2445 methyltransferase</fullName>
            <ecNumber evidence="1">2.1.1.173</ecNumber>
        </recommendedName>
        <alternativeName>
            <fullName evidence="1">rRNA (guanine-N(2)-)-methyltransferase RlmL</fullName>
        </alternativeName>
    </domain>
    <domain>
        <recommendedName>
            <fullName evidence="1">23S rRNA m7G2069 methyltransferase</fullName>
            <ecNumber evidence="1">2.1.1.264</ecNumber>
        </recommendedName>
        <alternativeName>
            <fullName evidence="1">rRNA (guanine-N(7)-)-methyltransferase RlmK</fullName>
        </alternativeName>
    </domain>
</protein>
<proteinExistence type="inferred from homology"/>
<dbReference type="EC" id="2.1.1.173" evidence="1"/>
<dbReference type="EC" id="2.1.1.264" evidence="1"/>
<dbReference type="EMBL" id="CP000038">
    <property type="protein sequence ID" value="AAZ87689.1"/>
    <property type="molecule type" value="Genomic_DNA"/>
</dbReference>
<dbReference type="SMR" id="Q3Z3H3"/>
<dbReference type="KEGG" id="ssn:SSON_0952"/>
<dbReference type="HOGENOM" id="CLU_014042_2_0_6"/>
<dbReference type="Proteomes" id="UP000002529">
    <property type="component" value="Chromosome"/>
</dbReference>
<dbReference type="GO" id="GO:0005737">
    <property type="term" value="C:cytoplasm"/>
    <property type="evidence" value="ECO:0007669"/>
    <property type="project" value="UniProtKB-SubCell"/>
</dbReference>
<dbReference type="GO" id="GO:0052915">
    <property type="term" value="F:23S rRNA (guanine(2445)-N(2))-methyltransferase activity"/>
    <property type="evidence" value="ECO:0007669"/>
    <property type="project" value="UniProtKB-UniRule"/>
</dbReference>
<dbReference type="GO" id="GO:0003723">
    <property type="term" value="F:RNA binding"/>
    <property type="evidence" value="ECO:0007669"/>
    <property type="project" value="UniProtKB-KW"/>
</dbReference>
<dbReference type="GO" id="GO:0070043">
    <property type="term" value="F:rRNA (guanine-N7-)-methyltransferase activity"/>
    <property type="evidence" value="ECO:0007669"/>
    <property type="project" value="UniProtKB-UniRule"/>
</dbReference>
<dbReference type="CDD" id="cd02440">
    <property type="entry name" value="AdoMet_MTases"/>
    <property type="match status" value="1"/>
</dbReference>
<dbReference type="CDD" id="cd11715">
    <property type="entry name" value="THUMP_AdoMetMT"/>
    <property type="match status" value="1"/>
</dbReference>
<dbReference type="FunFam" id="3.30.750.80:FF:000001">
    <property type="entry name" value="Ribosomal RNA large subunit methyltransferase K/L"/>
    <property type="match status" value="1"/>
</dbReference>
<dbReference type="FunFam" id="3.40.50.150:FF:000039">
    <property type="entry name" value="Ribosomal RNA large subunit methyltransferase K/L"/>
    <property type="match status" value="1"/>
</dbReference>
<dbReference type="Gene3D" id="3.30.2130.30">
    <property type="match status" value="1"/>
</dbReference>
<dbReference type="Gene3D" id="3.30.750.80">
    <property type="entry name" value="RNA methyltransferase domain (HRMD) like"/>
    <property type="match status" value="1"/>
</dbReference>
<dbReference type="Gene3D" id="3.40.50.150">
    <property type="entry name" value="Vaccinia Virus protein VP39"/>
    <property type="match status" value="2"/>
</dbReference>
<dbReference type="HAMAP" id="MF_01858">
    <property type="entry name" value="23SrRNA_methyltr_KL"/>
    <property type="match status" value="1"/>
</dbReference>
<dbReference type="InterPro" id="IPR017244">
    <property type="entry name" value="23SrRNA_methyltr_KL"/>
</dbReference>
<dbReference type="InterPro" id="IPR002052">
    <property type="entry name" value="DNA_methylase_N6_adenine_CS"/>
</dbReference>
<dbReference type="InterPro" id="IPR000241">
    <property type="entry name" value="RlmKL-like_Mtase"/>
</dbReference>
<dbReference type="InterPro" id="IPR053943">
    <property type="entry name" value="RlmKL-like_Mtase_CS"/>
</dbReference>
<dbReference type="InterPro" id="IPR054170">
    <property type="entry name" value="RlmL_1st"/>
</dbReference>
<dbReference type="InterPro" id="IPR019614">
    <property type="entry name" value="SAM-dep_methyl-trfase"/>
</dbReference>
<dbReference type="InterPro" id="IPR029063">
    <property type="entry name" value="SAM-dependent_MTases_sf"/>
</dbReference>
<dbReference type="InterPro" id="IPR004114">
    <property type="entry name" value="THUMP_dom"/>
</dbReference>
<dbReference type="NCBIfam" id="NF008748">
    <property type="entry name" value="PRK11783.1"/>
    <property type="match status" value="1"/>
</dbReference>
<dbReference type="PANTHER" id="PTHR47313">
    <property type="entry name" value="RIBOSOMAL RNA LARGE SUBUNIT METHYLTRANSFERASE K/L"/>
    <property type="match status" value="1"/>
</dbReference>
<dbReference type="PANTHER" id="PTHR47313:SF1">
    <property type="entry name" value="RIBOSOMAL RNA LARGE SUBUNIT METHYLTRANSFERASE K_L"/>
    <property type="match status" value="1"/>
</dbReference>
<dbReference type="Pfam" id="PF10672">
    <property type="entry name" value="Methyltrans_SAM"/>
    <property type="match status" value="1"/>
</dbReference>
<dbReference type="Pfam" id="PF22020">
    <property type="entry name" value="RlmL_1st"/>
    <property type="match status" value="1"/>
</dbReference>
<dbReference type="Pfam" id="PF02926">
    <property type="entry name" value="THUMP"/>
    <property type="match status" value="1"/>
</dbReference>
<dbReference type="Pfam" id="PF01170">
    <property type="entry name" value="UPF0020"/>
    <property type="match status" value="1"/>
</dbReference>
<dbReference type="PIRSF" id="PIRSF037618">
    <property type="entry name" value="RNA_Mtase_bacteria_prd"/>
    <property type="match status" value="1"/>
</dbReference>
<dbReference type="PRINTS" id="PR00507">
    <property type="entry name" value="N12N6MTFRASE"/>
</dbReference>
<dbReference type="SMART" id="SM00981">
    <property type="entry name" value="THUMP"/>
    <property type="match status" value="1"/>
</dbReference>
<dbReference type="SUPFAM" id="SSF53335">
    <property type="entry name" value="S-adenosyl-L-methionine-dependent methyltransferases"/>
    <property type="match status" value="2"/>
</dbReference>
<dbReference type="PROSITE" id="PS51165">
    <property type="entry name" value="THUMP"/>
    <property type="match status" value="1"/>
</dbReference>
<dbReference type="PROSITE" id="PS01261">
    <property type="entry name" value="UPF0020"/>
    <property type="match status" value="1"/>
</dbReference>